<accession>A1S217</accession>
<dbReference type="EMBL" id="CP000507">
    <property type="protein sequence ID" value="ABL98423.1"/>
    <property type="molecule type" value="Genomic_DNA"/>
</dbReference>
<dbReference type="RefSeq" id="WP_011758333.1">
    <property type="nucleotide sequence ID" value="NC_008700.1"/>
</dbReference>
<dbReference type="SMR" id="A1S217"/>
<dbReference type="STRING" id="326297.Sama_0212"/>
<dbReference type="KEGG" id="saz:Sama_0212"/>
<dbReference type="eggNOG" id="COG0051">
    <property type="taxonomic scope" value="Bacteria"/>
</dbReference>
<dbReference type="HOGENOM" id="CLU_122625_1_3_6"/>
<dbReference type="OrthoDB" id="9804464at2"/>
<dbReference type="Proteomes" id="UP000009175">
    <property type="component" value="Chromosome"/>
</dbReference>
<dbReference type="GO" id="GO:1990904">
    <property type="term" value="C:ribonucleoprotein complex"/>
    <property type="evidence" value="ECO:0007669"/>
    <property type="project" value="UniProtKB-KW"/>
</dbReference>
<dbReference type="GO" id="GO:0005840">
    <property type="term" value="C:ribosome"/>
    <property type="evidence" value="ECO:0007669"/>
    <property type="project" value="UniProtKB-KW"/>
</dbReference>
<dbReference type="GO" id="GO:0003735">
    <property type="term" value="F:structural constituent of ribosome"/>
    <property type="evidence" value="ECO:0007669"/>
    <property type="project" value="InterPro"/>
</dbReference>
<dbReference type="GO" id="GO:0000049">
    <property type="term" value="F:tRNA binding"/>
    <property type="evidence" value="ECO:0007669"/>
    <property type="project" value="UniProtKB-UniRule"/>
</dbReference>
<dbReference type="GO" id="GO:0006412">
    <property type="term" value="P:translation"/>
    <property type="evidence" value="ECO:0007669"/>
    <property type="project" value="UniProtKB-UniRule"/>
</dbReference>
<dbReference type="FunFam" id="3.30.70.600:FF:000001">
    <property type="entry name" value="30S ribosomal protein S10"/>
    <property type="match status" value="1"/>
</dbReference>
<dbReference type="Gene3D" id="3.30.70.600">
    <property type="entry name" value="Ribosomal protein S10 domain"/>
    <property type="match status" value="1"/>
</dbReference>
<dbReference type="HAMAP" id="MF_00508">
    <property type="entry name" value="Ribosomal_uS10"/>
    <property type="match status" value="1"/>
</dbReference>
<dbReference type="InterPro" id="IPR001848">
    <property type="entry name" value="Ribosomal_uS10"/>
</dbReference>
<dbReference type="InterPro" id="IPR018268">
    <property type="entry name" value="Ribosomal_uS10_CS"/>
</dbReference>
<dbReference type="InterPro" id="IPR027486">
    <property type="entry name" value="Ribosomal_uS10_dom"/>
</dbReference>
<dbReference type="InterPro" id="IPR036838">
    <property type="entry name" value="Ribosomal_uS10_dom_sf"/>
</dbReference>
<dbReference type="NCBIfam" id="NF001861">
    <property type="entry name" value="PRK00596.1"/>
    <property type="match status" value="1"/>
</dbReference>
<dbReference type="NCBIfam" id="TIGR01049">
    <property type="entry name" value="rpsJ_bact"/>
    <property type="match status" value="1"/>
</dbReference>
<dbReference type="PANTHER" id="PTHR11700">
    <property type="entry name" value="30S RIBOSOMAL PROTEIN S10 FAMILY MEMBER"/>
    <property type="match status" value="1"/>
</dbReference>
<dbReference type="Pfam" id="PF00338">
    <property type="entry name" value="Ribosomal_S10"/>
    <property type="match status" value="1"/>
</dbReference>
<dbReference type="PRINTS" id="PR00971">
    <property type="entry name" value="RIBOSOMALS10"/>
</dbReference>
<dbReference type="SMART" id="SM01403">
    <property type="entry name" value="Ribosomal_S10"/>
    <property type="match status" value="1"/>
</dbReference>
<dbReference type="SUPFAM" id="SSF54999">
    <property type="entry name" value="Ribosomal protein S10"/>
    <property type="match status" value="1"/>
</dbReference>
<dbReference type="PROSITE" id="PS00361">
    <property type="entry name" value="RIBOSOMAL_S10"/>
    <property type="match status" value="1"/>
</dbReference>
<reference key="1">
    <citation type="submission" date="2006-12" db="EMBL/GenBank/DDBJ databases">
        <title>Complete sequence of Shewanella amazonensis SB2B.</title>
        <authorList>
            <consortium name="US DOE Joint Genome Institute"/>
            <person name="Copeland A."/>
            <person name="Lucas S."/>
            <person name="Lapidus A."/>
            <person name="Barry K."/>
            <person name="Detter J.C."/>
            <person name="Glavina del Rio T."/>
            <person name="Hammon N."/>
            <person name="Israni S."/>
            <person name="Dalin E."/>
            <person name="Tice H."/>
            <person name="Pitluck S."/>
            <person name="Munk A.C."/>
            <person name="Brettin T."/>
            <person name="Bruce D."/>
            <person name="Han C."/>
            <person name="Tapia R."/>
            <person name="Gilna P."/>
            <person name="Schmutz J."/>
            <person name="Larimer F."/>
            <person name="Land M."/>
            <person name="Hauser L."/>
            <person name="Kyrpides N."/>
            <person name="Mikhailova N."/>
            <person name="Fredrickson J."/>
            <person name="Richardson P."/>
        </authorList>
    </citation>
    <scope>NUCLEOTIDE SEQUENCE [LARGE SCALE GENOMIC DNA]</scope>
    <source>
        <strain>ATCC BAA-1098 / SB2B</strain>
    </source>
</reference>
<comment type="function">
    <text evidence="1">Involved in the binding of tRNA to the ribosomes.</text>
</comment>
<comment type="subunit">
    <text evidence="1">Part of the 30S ribosomal subunit.</text>
</comment>
<comment type="similarity">
    <text evidence="1">Belongs to the universal ribosomal protein uS10 family.</text>
</comment>
<sequence>MQNQRIRIRLKGFDHRLIDQSTAEIVETAKRTGAQVRGPIPLPTRKERFTVLISPHVNKDARDQYELRTHKRLVDIVEPTEKTVDALMRLDLAAGVDVQISLG</sequence>
<feature type="chain" id="PRO_1000015106" description="Small ribosomal subunit protein uS10">
    <location>
        <begin position="1"/>
        <end position="103"/>
    </location>
</feature>
<organism>
    <name type="scientific">Shewanella amazonensis (strain ATCC BAA-1098 / SB2B)</name>
    <dbReference type="NCBI Taxonomy" id="326297"/>
    <lineage>
        <taxon>Bacteria</taxon>
        <taxon>Pseudomonadati</taxon>
        <taxon>Pseudomonadota</taxon>
        <taxon>Gammaproteobacteria</taxon>
        <taxon>Alteromonadales</taxon>
        <taxon>Shewanellaceae</taxon>
        <taxon>Shewanella</taxon>
    </lineage>
</organism>
<protein>
    <recommendedName>
        <fullName evidence="1">Small ribosomal subunit protein uS10</fullName>
    </recommendedName>
    <alternativeName>
        <fullName evidence="2">30S ribosomal protein S10</fullName>
    </alternativeName>
</protein>
<keyword id="KW-1185">Reference proteome</keyword>
<keyword id="KW-0687">Ribonucleoprotein</keyword>
<keyword id="KW-0689">Ribosomal protein</keyword>
<gene>
    <name evidence="1" type="primary">rpsJ</name>
    <name type="ordered locus">Sama_0212</name>
</gene>
<proteinExistence type="inferred from homology"/>
<name>RS10_SHEAM</name>
<evidence type="ECO:0000255" key="1">
    <source>
        <dbReference type="HAMAP-Rule" id="MF_00508"/>
    </source>
</evidence>
<evidence type="ECO:0000305" key="2"/>